<feature type="chain" id="PRO_1000015766" description="Elongation factor Tu">
    <location>
        <begin position="1"/>
        <end position="397"/>
    </location>
</feature>
<feature type="domain" description="tr-type G">
    <location>
        <begin position="10"/>
        <end position="207"/>
    </location>
</feature>
<feature type="region of interest" description="G1" evidence="1">
    <location>
        <begin position="19"/>
        <end position="26"/>
    </location>
</feature>
<feature type="region of interest" description="G2" evidence="1">
    <location>
        <begin position="60"/>
        <end position="64"/>
    </location>
</feature>
<feature type="region of interest" description="G3" evidence="1">
    <location>
        <begin position="81"/>
        <end position="84"/>
    </location>
</feature>
<feature type="region of interest" description="G4" evidence="1">
    <location>
        <begin position="136"/>
        <end position="139"/>
    </location>
</feature>
<feature type="region of interest" description="G5" evidence="1">
    <location>
        <begin position="174"/>
        <end position="176"/>
    </location>
</feature>
<feature type="binding site" evidence="2">
    <location>
        <begin position="19"/>
        <end position="26"/>
    </location>
    <ligand>
        <name>GTP</name>
        <dbReference type="ChEBI" id="CHEBI:37565"/>
    </ligand>
</feature>
<feature type="binding site" evidence="2">
    <location>
        <position position="26"/>
    </location>
    <ligand>
        <name>Mg(2+)</name>
        <dbReference type="ChEBI" id="CHEBI:18420"/>
    </ligand>
</feature>
<feature type="binding site" evidence="2">
    <location>
        <begin position="81"/>
        <end position="85"/>
    </location>
    <ligand>
        <name>GTP</name>
        <dbReference type="ChEBI" id="CHEBI:37565"/>
    </ligand>
</feature>
<feature type="binding site" evidence="2">
    <location>
        <begin position="136"/>
        <end position="139"/>
    </location>
    <ligand>
        <name>GTP</name>
        <dbReference type="ChEBI" id="CHEBI:37565"/>
    </ligand>
</feature>
<organism>
    <name type="scientific">Syntrophus aciditrophicus (strain SB)</name>
    <dbReference type="NCBI Taxonomy" id="56780"/>
    <lineage>
        <taxon>Bacteria</taxon>
        <taxon>Pseudomonadati</taxon>
        <taxon>Thermodesulfobacteriota</taxon>
        <taxon>Syntrophia</taxon>
        <taxon>Syntrophales</taxon>
        <taxon>Syntrophaceae</taxon>
        <taxon>Syntrophus</taxon>
    </lineage>
</organism>
<accession>Q2LQA3</accession>
<reference key="1">
    <citation type="journal article" date="2007" name="Proc. Natl. Acad. Sci. U.S.A.">
        <title>The genome of Syntrophus aciditrophicus: life at the thermodynamic limit of microbial growth.</title>
        <authorList>
            <person name="McInerney M.J."/>
            <person name="Rohlin L."/>
            <person name="Mouttaki H."/>
            <person name="Kim U."/>
            <person name="Krupp R.S."/>
            <person name="Rios-Hernandez L."/>
            <person name="Sieber J."/>
            <person name="Struchtemeyer C.G."/>
            <person name="Bhattacharyya A."/>
            <person name="Campbell J.W."/>
            <person name="Gunsalus R.P."/>
        </authorList>
    </citation>
    <scope>NUCLEOTIDE SEQUENCE [LARGE SCALE GENOMIC DNA]</scope>
    <source>
        <strain>SB</strain>
    </source>
</reference>
<dbReference type="EC" id="3.6.5.3" evidence="2"/>
<dbReference type="EMBL" id="CP000252">
    <property type="protein sequence ID" value="ABC76178.1"/>
    <property type="molecule type" value="Genomic_DNA"/>
</dbReference>
<dbReference type="RefSeq" id="WP_011416212.1">
    <property type="nucleotide sequence ID" value="NC_007759.1"/>
</dbReference>
<dbReference type="SMR" id="Q2LQA3"/>
<dbReference type="FunCoup" id="Q2LQA3">
    <property type="interactions" value="564"/>
</dbReference>
<dbReference type="STRING" id="56780.SYN_00983"/>
<dbReference type="KEGG" id="sat:SYN_00983"/>
<dbReference type="eggNOG" id="COG0050">
    <property type="taxonomic scope" value="Bacteria"/>
</dbReference>
<dbReference type="HOGENOM" id="CLU_007265_0_0_7"/>
<dbReference type="InParanoid" id="Q2LQA3"/>
<dbReference type="OrthoDB" id="9803139at2"/>
<dbReference type="Proteomes" id="UP000001933">
    <property type="component" value="Chromosome"/>
</dbReference>
<dbReference type="GO" id="GO:0005829">
    <property type="term" value="C:cytosol"/>
    <property type="evidence" value="ECO:0007669"/>
    <property type="project" value="TreeGrafter"/>
</dbReference>
<dbReference type="GO" id="GO:0005525">
    <property type="term" value="F:GTP binding"/>
    <property type="evidence" value="ECO:0007669"/>
    <property type="project" value="UniProtKB-UniRule"/>
</dbReference>
<dbReference type="GO" id="GO:0003924">
    <property type="term" value="F:GTPase activity"/>
    <property type="evidence" value="ECO:0007669"/>
    <property type="project" value="InterPro"/>
</dbReference>
<dbReference type="GO" id="GO:0003746">
    <property type="term" value="F:translation elongation factor activity"/>
    <property type="evidence" value="ECO:0007669"/>
    <property type="project" value="UniProtKB-UniRule"/>
</dbReference>
<dbReference type="CDD" id="cd01884">
    <property type="entry name" value="EF_Tu"/>
    <property type="match status" value="1"/>
</dbReference>
<dbReference type="CDD" id="cd03697">
    <property type="entry name" value="EFTU_II"/>
    <property type="match status" value="1"/>
</dbReference>
<dbReference type="CDD" id="cd03707">
    <property type="entry name" value="EFTU_III"/>
    <property type="match status" value="1"/>
</dbReference>
<dbReference type="FunFam" id="2.40.30.10:FF:000001">
    <property type="entry name" value="Elongation factor Tu"/>
    <property type="match status" value="1"/>
</dbReference>
<dbReference type="FunFam" id="3.40.50.300:FF:000003">
    <property type="entry name" value="Elongation factor Tu"/>
    <property type="match status" value="1"/>
</dbReference>
<dbReference type="Gene3D" id="3.40.50.300">
    <property type="entry name" value="P-loop containing nucleotide triphosphate hydrolases"/>
    <property type="match status" value="1"/>
</dbReference>
<dbReference type="Gene3D" id="2.40.30.10">
    <property type="entry name" value="Translation factors"/>
    <property type="match status" value="2"/>
</dbReference>
<dbReference type="HAMAP" id="MF_00118_B">
    <property type="entry name" value="EF_Tu_B"/>
    <property type="match status" value="1"/>
</dbReference>
<dbReference type="InterPro" id="IPR041709">
    <property type="entry name" value="EF-Tu_GTP-bd"/>
</dbReference>
<dbReference type="InterPro" id="IPR050055">
    <property type="entry name" value="EF-Tu_GTPase"/>
</dbReference>
<dbReference type="InterPro" id="IPR004161">
    <property type="entry name" value="EFTu-like_2"/>
</dbReference>
<dbReference type="InterPro" id="IPR033720">
    <property type="entry name" value="EFTU_2"/>
</dbReference>
<dbReference type="InterPro" id="IPR031157">
    <property type="entry name" value="G_TR_CS"/>
</dbReference>
<dbReference type="InterPro" id="IPR027417">
    <property type="entry name" value="P-loop_NTPase"/>
</dbReference>
<dbReference type="InterPro" id="IPR005225">
    <property type="entry name" value="Small_GTP-bd"/>
</dbReference>
<dbReference type="InterPro" id="IPR000795">
    <property type="entry name" value="T_Tr_GTP-bd_dom"/>
</dbReference>
<dbReference type="InterPro" id="IPR009000">
    <property type="entry name" value="Transl_B-barrel_sf"/>
</dbReference>
<dbReference type="InterPro" id="IPR009001">
    <property type="entry name" value="Transl_elong_EF1A/Init_IF2_C"/>
</dbReference>
<dbReference type="InterPro" id="IPR004541">
    <property type="entry name" value="Transl_elong_EFTu/EF1A_bac/org"/>
</dbReference>
<dbReference type="InterPro" id="IPR004160">
    <property type="entry name" value="Transl_elong_EFTu/EF1A_C"/>
</dbReference>
<dbReference type="NCBIfam" id="TIGR00485">
    <property type="entry name" value="EF-Tu"/>
    <property type="match status" value="1"/>
</dbReference>
<dbReference type="NCBIfam" id="NF000766">
    <property type="entry name" value="PRK00049.1"/>
    <property type="match status" value="1"/>
</dbReference>
<dbReference type="NCBIfam" id="NF009372">
    <property type="entry name" value="PRK12735.1"/>
    <property type="match status" value="1"/>
</dbReference>
<dbReference type="NCBIfam" id="NF009373">
    <property type="entry name" value="PRK12736.1"/>
    <property type="match status" value="1"/>
</dbReference>
<dbReference type="NCBIfam" id="TIGR00231">
    <property type="entry name" value="small_GTP"/>
    <property type="match status" value="1"/>
</dbReference>
<dbReference type="PANTHER" id="PTHR43721:SF22">
    <property type="entry name" value="ELONGATION FACTOR TU, MITOCHONDRIAL"/>
    <property type="match status" value="1"/>
</dbReference>
<dbReference type="PANTHER" id="PTHR43721">
    <property type="entry name" value="ELONGATION FACTOR TU-RELATED"/>
    <property type="match status" value="1"/>
</dbReference>
<dbReference type="Pfam" id="PF00009">
    <property type="entry name" value="GTP_EFTU"/>
    <property type="match status" value="1"/>
</dbReference>
<dbReference type="Pfam" id="PF03144">
    <property type="entry name" value="GTP_EFTU_D2"/>
    <property type="match status" value="1"/>
</dbReference>
<dbReference type="Pfam" id="PF03143">
    <property type="entry name" value="GTP_EFTU_D3"/>
    <property type="match status" value="1"/>
</dbReference>
<dbReference type="PRINTS" id="PR00315">
    <property type="entry name" value="ELONGATNFCT"/>
</dbReference>
<dbReference type="SUPFAM" id="SSF50465">
    <property type="entry name" value="EF-Tu/eEF-1alpha/eIF2-gamma C-terminal domain"/>
    <property type="match status" value="1"/>
</dbReference>
<dbReference type="SUPFAM" id="SSF52540">
    <property type="entry name" value="P-loop containing nucleoside triphosphate hydrolases"/>
    <property type="match status" value="1"/>
</dbReference>
<dbReference type="SUPFAM" id="SSF50447">
    <property type="entry name" value="Translation proteins"/>
    <property type="match status" value="1"/>
</dbReference>
<dbReference type="PROSITE" id="PS00301">
    <property type="entry name" value="G_TR_1"/>
    <property type="match status" value="1"/>
</dbReference>
<dbReference type="PROSITE" id="PS51722">
    <property type="entry name" value="G_TR_2"/>
    <property type="match status" value="1"/>
</dbReference>
<comment type="function">
    <text evidence="2">GTP hydrolase that promotes the GTP-dependent binding of aminoacyl-tRNA to the A-site of ribosomes during protein biosynthesis.</text>
</comment>
<comment type="catalytic activity">
    <reaction evidence="2">
        <text>GTP + H2O = GDP + phosphate + H(+)</text>
        <dbReference type="Rhea" id="RHEA:19669"/>
        <dbReference type="ChEBI" id="CHEBI:15377"/>
        <dbReference type="ChEBI" id="CHEBI:15378"/>
        <dbReference type="ChEBI" id="CHEBI:37565"/>
        <dbReference type="ChEBI" id="CHEBI:43474"/>
        <dbReference type="ChEBI" id="CHEBI:58189"/>
        <dbReference type="EC" id="3.6.5.3"/>
    </reaction>
    <physiologicalReaction direction="left-to-right" evidence="2">
        <dbReference type="Rhea" id="RHEA:19670"/>
    </physiologicalReaction>
</comment>
<comment type="subunit">
    <text evidence="2">Monomer.</text>
</comment>
<comment type="subcellular location">
    <subcellularLocation>
        <location evidence="2">Cytoplasm</location>
    </subcellularLocation>
</comment>
<comment type="similarity">
    <text evidence="2">Belongs to the TRAFAC class translation factor GTPase superfamily. Classic translation factor GTPase family. EF-Tu/EF-1A subfamily.</text>
</comment>
<sequence>MAKKKFERTKPHLNIGTIGHVDHGKTTLTAAITKWLAKKGLAEFRAFDSIDNAPEEKERGVTINISHVEYQTDKRHYAHVDCPGHADYIKNMISGAAHMDGTILVVAASDGPMPQTREHILLARQVQVPSIVVFLNKVDLVDDPELLDLVELELRELLNEYEFPGDDIPIIRGSALKALESENPDDPDVKQIYALMDAVDAYIPEPERDLDKPFLMPVGDVFTISGRGTVVTGRIDRGIIKTGDEVEIVGVRPTQKTVCTGVEMFRKTLDEGRAGDDVGLLLRGIKREDVERGQVVAKPGSITPHTKFMAQVYVLTKEEGGRHTPFFTGYRPQFYFRTTDVTGVAKLAEGVEMVMPGDNVEMEVTLITPIAMEEQLRFAIREGGRTVGAGVVSKVIE</sequence>
<keyword id="KW-0963">Cytoplasm</keyword>
<keyword id="KW-0251">Elongation factor</keyword>
<keyword id="KW-0342">GTP-binding</keyword>
<keyword id="KW-0378">Hydrolase</keyword>
<keyword id="KW-0460">Magnesium</keyword>
<keyword id="KW-0479">Metal-binding</keyword>
<keyword id="KW-0547">Nucleotide-binding</keyword>
<keyword id="KW-0648">Protein biosynthesis</keyword>
<keyword id="KW-1185">Reference proteome</keyword>
<proteinExistence type="inferred from homology"/>
<evidence type="ECO:0000250" key="1"/>
<evidence type="ECO:0000255" key="2">
    <source>
        <dbReference type="HAMAP-Rule" id="MF_00118"/>
    </source>
</evidence>
<name>EFTU_SYNAS</name>
<protein>
    <recommendedName>
        <fullName evidence="2">Elongation factor Tu</fullName>
        <shortName evidence="2">EF-Tu</shortName>
        <ecNumber evidence="2">3.6.5.3</ecNumber>
    </recommendedName>
</protein>
<gene>
    <name evidence="2" type="primary">tuf</name>
    <name type="ordered locus">SYNAS_02990</name>
    <name type="ORF">SYN_00983</name>
</gene>